<comment type="catalytic activity">
    <reaction evidence="1">
        <text>tRNA(Gln) + L-glutamine + ATP = L-glutaminyl-tRNA(Gln) + AMP + diphosphate</text>
        <dbReference type="Rhea" id="RHEA:20121"/>
        <dbReference type="Rhea" id="RHEA-COMP:9662"/>
        <dbReference type="Rhea" id="RHEA-COMP:9681"/>
        <dbReference type="ChEBI" id="CHEBI:30616"/>
        <dbReference type="ChEBI" id="CHEBI:33019"/>
        <dbReference type="ChEBI" id="CHEBI:58359"/>
        <dbReference type="ChEBI" id="CHEBI:78442"/>
        <dbReference type="ChEBI" id="CHEBI:78521"/>
        <dbReference type="ChEBI" id="CHEBI:456215"/>
        <dbReference type="EC" id="6.1.1.18"/>
    </reaction>
</comment>
<comment type="subunit">
    <text evidence="1">Monomer.</text>
</comment>
<comment type="subcellular location">
    <subcellularLocation>
        <location evidence="1">Cytoplasm</location>
    </subcellularLocation>
</comment>
<comment type="similarity">
    <text evidence="1">Belongs to the class-I aminoacyl-tRNA synthetase family.</text>
</comment>
<gene>
    <name evidence="1" type="primary">glnS</name>
    <name type="ordered locus">XCV0930</name>
</gene>
<evidence type="ECO:0000255" key="1">
    <source>
        <dbReference type="HAMAP-Rule" id="MF_00126"/>
    </source>
</evidence>
<organism>
    <name type="scientific">Xanthomonas euvesicatoria pv. vesicatoria (strain 85-10)</name>
    <name type="common">Xanthomonas campestris pv. vesicatoria</name>
    <dbReference type="NCBI Taxonomy" id="316273"/>
    <lineage>
        <taxon>Bacteria</taxon>
        <taxon>Pseudomonadati</taxon>
        <taxon>Pseudomonadota</taxon>
        <taxon>Gammaproteobacteria</taxon>
        <taxon>Lysobacterales</taxon>
        <taxon>Lysobacteraceae</taxon>
        <taxon>Xanthomonas</taxon>
    </lineage>
</organism>
<name>SYQ_XANE5</name>
<proteinExistence type="inferred from homology"/>
<accession>Q3BX52</accession>
<protein>
    <recommendedName>
        <fullName evidence="1">Glutamine--tRNA ligase</fullName>
        <ecNumber evidence="1">6.1.1.18</ecNumber>
    </recommendedName>
    <alternativeName>
        <fullName evidence="1">Glutaminyl-tRNA synthetase</fullName>
        <shortName evidence="1">GlnRS</shortName>
    </alternativeName>
</protein>
<sequence length="579" mass="65842">MSETLATDATAPAEKKDFIRQIVREDLASGKHTVIRTRFPPEPNGYLHIGHAKAICLDFGLAAEFGGLCNLRLDDTNPAKEDPEFVVAIQDDVRWLGYEWAQLRHASDYFQVYYLAAQKLIRDGHAFVCDLSAEQVRQYRGTLTEPGRNSPFRERSVEENLELFARMRAGEFPDGARTLRAKIDMASGNINLRDPALYRIKHVEHQNTGNAWPIYPMYDFAHSLGDAVEGITHSLCTLEFEDHRPLYDWCVDKVDLAGHPELLQPLLDKGLPREAAKPRQIEFSRLNINYTVMSKRKLTALVEEQLVDGWDDPRMYTLQGLRRRGYTPAAMRLFVDRVGISKQNSLIDFSVLEGCLREDLDAAAPRRMAVIDPLKLVLTNLPEGHTETLQFSNHPKDESFGTREVPFARELWIEREDFAEVPPKGWKRLVPGGEIRLRGAGIARVDEVIKNADGEIVELRGWLDPESRPGMEGANRKVKGTIHWVSAVHAVEAEIRLYDRLFSVEKPDDESEGKTYRDYLNPESKRNVRGYVEPSAAMAAPEQAFQFERSGYFVADRRDHSAATPVFNRSVTLRDTWAK</sequence>
<keyword id="KW-0030">Aminoacyl-tRNA synthetase</keyword>
<keyword id="KW-0067">ATP-binding</keyword>
<keyword id="KW-0963">Cytoplasm</keyword>
<keyword id="KW-0436">Ligase</keyword>
<keyword id="KW-0547">Nucleotide-binding</keyword>
<keyword id="KW-0648">Protein biosynthesis</keyword>
<reference key="1">
    <citation type="journal article" date="2005" name="J. Bacteriol.">
        <title>Insights into genome plasticity and pathogenicity of the plant pathogenic Bacterium Xanthomonas campestris pv. vesicatoria revealed by the complete genome sequence.</title>
        <authorList>
            <person name="Thieme F."/>
            <person name="Koebnik R."/>
            <person name="Bekel T."/>
            <person name="Berger C."/>
            <person name="Boch J."/>
            <person name="Buettner D."/>
            <person name="Caldana C."/>
            <person name="Gaigalat L."/>
            <person name="Goesmann A."/>
            <person name="Kay S."/>
            <person name="Kirchner O."/>
            <person name="Lanz C."/>
            <person name="Linke B."/>
            <person name="McHardy A.C."/>
            <person name="Meyer F."/>
            <person name="Mittenhuber G."/>
            <person name="Nies D.H."/>
            <person name="Niesbach-Kloesgen U."/>
            <person name="Patschkowski T."/>
            <person name="Rueckert C."/>
            <person name="Rupp O."/>
            <person name="Schneiker S."/>
            <person name="Schuster S.C."/>
            <person name="Vorhoelter F.J."/>
            <person name="Weber E."/>
            <person name="Puehler A."/>
            <person name="Bonas U."/>
            <person name="Bartels D."/>
            <person name="Kaiser O."/>
        </authorList>
    </citation>
    <scope>NUCLEOTIDE SEQUENCE [LARGE SCALE GENOMIC DNA]</scope>
    <source>
        <strain>85-10</strain>
    </source>
</reference>
<dbReference type="EC" id="6.1.1.18" evidence="1"/>
<dbReference type="EMBL" id="AM039952">
    <property type="protein sequence ID" value="CAJ22561.1"/>
    <property type="molecule type" value="Genomic_DNA"/>
</dbReference>
<dbReference type="RefSeq" id="WP_011346499.1">
    <property type="nucleotide sequence ID" value="NZ_CP017190.1"/>
</dbReference>
<dbReference type="SMR" id="Q3BX52"/>
<dbReference type="STRING" id="456327.BJD11_18125"/>
<dbReference type="KEGG" id="xcv:XCV0930"/>
<dbReference type="eggNOG" id="COG0008">
    <property type="taxonomic scope" value="Bacteria"/>
</dbReference>
<dbReference type="HOGENOM" id="CLU_001882_2_3_6"/>
<dbReference type="Proteomes" id="UP000007069">
    <property type="component" value="Chromosome"/>
</dbReference>
<dbReference type="GO" id="GO:0005829">
    <property type="term" value="C:cytosol"/>
    <property type="evidence" value="ECO:0007669"/>
    <property type="project" value="TreeGrafter"/>
</dbReference>
<dbReference type="GO" id="GO:0005524">
    <property type="term" value="F:ATP binding"/>
    <property type="evidence" value="ECO:0007669"/>
    <property type="project" value="UniProtKB-UniRule"/>
</dbReference>
<dbReference type="GO" id="GO:0004819">
    <property type="term" value="F:glutamine-tRNA ligase activity"/>
    <property type="evidence" value="ECO:0007669"/>
    <property type="project" value="UniProtKB-UniRule"/>
</dbReference>
<dbReference type="GO" id="GO:0006425">
    <property type="term" value="P:glutaminyl-tRNA aminoacylation"/>
    <property type="evidence" value="ECO:0007669"/>
    <property type="project" value="InterPro"/>
</dbReference>
<dbReference type="GO" id="GO:0006424">
    <property type="term" value="P:glutamyl-tRNA aminoacylation"/>
    <property type="evidence" value="ECO:0007669"/>
    <property type="project" value="UniProtKB-UniRule"/>
</dbReference>
<dbReference type="FunFam" id="1.10.1160.10:FF:000001">
    <property type="entry name" value="Glutamine--tRNA ligase"/>
    <property type="match status" value="1"/>
</dbReference>
<dbReference type="FunFam" id="2.40.240.10:FF:000020">
    <property type="entry name" value="Glutamine--tRNA ligase"/>
    <property type="match status" value="1"/>
</dbReference>
<dbReference type="FunFam" id="2.40.240.10:FF:000023">
    <property type="entry name" value="Glutamine--tRNA ligase"/>
    <property type="match status" value="1"/>
</dbReference>
<dbReference type="FunFam" id="3.90.800.10:FF:000002">
    <property type="entry name" value="Glutamine--tRNA ligase"/>
    <property type="match status" value="1"/>
</dbReference>
<dbReference type="FunFam" id="3.40.50.620:FF:000037">
    <property type="entry name" value="Glutamine--tRNA ligase cytoplasmic"/>
    <property type="match status" value="1"/>
</dbReference>
<dbReference type="Gene3D" id="1.10.1160.10">
    <property type="entry name" value="Glutamyl-trna Synthetase, Domain 2"/>
    <property type="match status" value="1"/>
</dbReference>
<dbReference type="Gene3D" id="3.90.800.10">
    <property type="entry name" value="Glutamyl-tRNA Synthetase, Domain 3"/>
    <property type="match status" value="1"/>
</dbReference>
<dbReference type="Gene3D" id="3.40.50.620">
    <property type="entry name" value="HUPs"/>
    <property type="match status" value="1"/>
</dbReference>
<dbReference type="Gene3D" id="2.40.240.10">
    <property type="entry name" value="Ribosomal Protein L25, Chain P"/>
    <property type="match status" value="2"/>
</dbReference>
<dbReference type="HAMAP" id="MF_00126">
    <property type="entry name" value="Gln_tRNA_synth"/>
    <property type="match status" value="1"/>
</dbReference>
<dbReference type="InterPro" id="IPR001412">
    <property type="entry name" value="aa-tRNA-synth_I_CS"/>
</dbReference>
<dbReference type="InterPro" id="IPR004514">
    <property type="entry name" value="Gln-tRNA-synth"/>
</dbReference>
<dbReference type="InterPro" id="IPR050132">
    <property type="entry name" value="Gln/Glu-tRNA_Ligase"/>
</dbReference>
<dbReference type="InterPro" id="IPR022861">
    <property type="entry name" value="Gln_tRNA_ligase_bac"/>
</dbReference>
<dbReference type="InterPro" id="IPR000924">
    <property type="entry name" value="Glu/Gln-tRNA-synth"/>
</dbReference>
<dbReference type="InterPro" id="IPR020058">
    <property type="entry name" value="Glu/Gln-tRNA-synth_Ib_cat-dom"/>
</dbReference>
<dbReference type="InterPro" id="IPR020059">
    <property type="entry name" value="Glu/Gln-tRNA-synth_Ib_codon-bd"/>
</dbReference>
<dbReference type="InterPro" id="IPR020061">
    <property type="entry name" value="Glu_tRNA_lig_a-bdl"/>
</dbReference>
<dbReference type="InterPro" id="IPR020056">
    <property type="entry name" value="Rbsml_bL25/Gln-tRNA_synth_N"/>
</dbReference>
<dbReference type="InterPro" id="IPR011035">
    <property type="entry name" value="Ribosomal_bL25/Gln-tRNA_synth"/>
</dbReference>
<dbReference type="InterPro" id="IPR014729">
    <property type="entry name" value="Rossmann-like_a/b/a_fold"/>
</dbReference>
<dbReference type="InterPro" id="IPR049437">
    <property type="entry name" value="tRNA-synt_1c_C2"/>
</dbReference>
<dbReference type="NCBIfam" id="TIGR00440">
    <property type="entry name" value="glnS"/>
    <property type="match status" value="1"/>
</dbReference>
<dbReference type="NCBIfam" id="NF011291">
    <property type="entry name" value="PRK14703.1"/>
    <property type="match status" value="1"/>
</dbReference>
<dbReference type="PANTHER" id="PTHR43097:SF5">
    <property type="entry name" value="GLUTAMATE--TRNA LIGASE"/>
    <property type="match status" value="1"/>
</dbReference>
<dbReference type="PANTHER" id="PTHR43097">
    <property type="entry name" value="GLUTAMINE-TRNA LIGASE"/>
    <property type="match status" value="1"/>
</dbReference>
<dbReference type="Pfam" id="PF00749">
    <property type="entry name" value="tRNA-synt_1c"/>
    <property type="match status" value="1"/>
</dbReference>
<dbReference type="Pfam" id="PF03950">
    <property type="entry name" value="tRNA-synt_1c_C"/>
    <property type="match status" value="1"/>
</dbReference>
<dbReference type="Pfam" id="PF20974">
    <property type="entry name" value="tRNA-synt_1c_C2"/>
    <property type="match status" value="1"/>
</dbReference>
<dbReference type="PRINTS" id="PR00987">
    <property type="entry name" value="TRNASYNTHGLU"/>
</dbReference>
<dbReference type="SUPFAM" id="SSF52374">
    <property type="entry name" value="Nucleotidylyl transferase"/>
    <property type="match status" value="1"/>
</dbReference>
<dbReference type="SUPFAM" id="SSF50715">
    <property type="entry name" value="Ribosomal protein L25-like"/>
    <property type="match status" value="1"/>
</dbReference>
<dbReference type="PROSITE" id="PS00178">
    <property type="entry name" value="AA_TRNA_LIGASE_I"/>
    <property type="match status" value="1"/>
</dbReference>
<feature type="chain" id="PRO_0000242881" description="Glutamine--tRNA ligase">
    <location>
        <begin position="1"/>
        <end position="579"/>
    </location>
</feature>
<feature type="short sequence motif" description="'HIGH' region" evidence="1">
    <location>
        <begin position="41"/>
        <end position="51"/>
    </location>
</feature>
<feature type="short sequence motif" description="'KMSKS' region" evidence="1">
    <location>
        <begin position="292"/>
        <end position="296"/>
    </location>
</feature>
<feature type="binding site" evidence="1">
    <location>
        <begin position="42"/>
        <end position="44"/>
    </location>
    <ligand>
        <name>ATP</name>
        <dbReference type="ChEBI" id="CHEBI:30616"/>
    </ligand>
</feature>
<feature type="binding site" evidence="1">
    <location>
        <begin position="48"/>
        <end position="54"/>
    </location>
    <ligand>
        <name>ATP</name>
        <dbReference type="ChEBI" id="CHEBI:30616"/>
    </ligand>
</feature>
<feature type="binding site" evidence="1">
    <location>
        <position position="74"/>
    </location>
    <ligand>
        <name>L-glutamine</name>
        <dbReference type="ChEBI" id="CHEBI:58359"/>
    </ligand>
</feature>
<feature type="binding site" evidence="1">
    <location>
        <position position="218"/>
    </location>
    <ligand>
        <name>L-glutamine</name>
        <dbReference type="ChEBI" id="CHEBI:58359"/>
    </ligand>
</feature>
<feature type="binding site" evidence="1">
    <location>
        <position position="237"/>
    </location>
    <ligand>
        <name>ATP</name>
        <dbReference type="ChEBI" id="CHEBI:30616"/>
    </ligand>
</feature>
<feature type="binding site" evidence="1">
    <location>
        <begin position="285"/>
        <end position="286"/>
    </location>
    <ligand>
        <name>ATP</name>
        <dbReference type="ChEBI" id="CHEBI:30616"/>
    </ligand>
</feature>
<feature type="binding site" evidence="1">
    <location>
        <begin position="293"/>
        <end position="295"/>
    </location>
    <ligand>
        <name>ATP</name>
        <dbReference type="ChEBI" id="CHEBI:30616"/>
    </ligand>
</feature>